<keyword id="KW-0030">Aminoacyl-tRNA synthetase</keyword>
<keyword id="KW-0067">ATP-binding</keyword>
<keyword id="KW-0963">Cytoplasm</keyword>
<keyword id="KW-0436">Ligase</keyword>
<keyword id="KW-0547">Nucleotide-binding</keyword>
<keyword id="KW-0648">Protein biosynthesis</keyword>
<sequence length="597" mass="66759">MKIEDKLVTSVISGLKALYGQDVPAAQVQLQKTKKEFEGHLTLVVFPFLKMSKKGPEQTAQEIGEYLKANEPAVAAFNVIKGFLNLTVASATWIELLNEIHTDAQYGIVSADENAPLVMIEYSSPNTNKPLHLGHVRNNLLGNALANIVMANGNKVVKTNIVNDRGIHICKSMLAWQKYGKGETPESSGKKGDHLVGDYYVAFDKHYKAEVAELMEKGMSKEEAEAASPLMNEAREMLVKWEAGDPEVRALWQMMNNWVYAGFDETYRKMGVGFDKIYYESNTYLEGKEKVMEGLEKGFFFKKEDGSVWADLTAEGLDHKLLLRGDGTSVYMTQDIGTAKLRFADYPIDKMIYVVGNEQNYHFQVLSILLDKLGFEWGKSLVHFSYGMVELPEGKMKSREGTVVDADDLMAEMIATAKETSQELGKLDGLTQEEADDIARIVGLGALKYFILKVDARKNMTFNPKESIDFNGNTGPFIQYTYARIRSVLRKAAEAGIVIPEVLPANIELSEKEEGLIQMVADFAAVVRQAGEDYSPSGIANYVYDLVKEYNQFYHDFSILREENEDVKLFRIALSANIAKVVRLGMGLLGIEVPDRM</sequence>
<proteinExistence type="inferred from homology"/>
<feature type="chain" id="PRO_0000241987" description="Arginine--tRNA ligase">
    <location>
        <begin position="1"/>
        <end position="597"/>
    </location>
</feature>
<feature type="short sequence motif" description="'HIGH' region">
    <location>
        <begin position="125"/>
        <end position="135"/>
    </location>
</feature>
<evidence type="ECO:0000255" key="1">
    <source>
        <dbReference type="HAMAP-Rule" id="MF_00123"/>
    </source>
</evidence>
<reference key="1">
    <citation type="journal article" date="2005" name="Science">
        <title>Extensive DNA inversions in the B. fragilis genome control variable gene expression.</title>
        <authorList>
            <person name="Cerdeno-Tarraga A.-M."/>
            <person name="Patrick S."/>
            <person name="Crossman L.C."/>
            <person name="Blakely G."/>
            <person name="Abratt V."/>
            <person name="Lennard N."/>
            <person name="Poxton I."/>
            <person name="Duerden B."/>
            <person name="Harris B."/>
            <person name="Quail M.A."/>
            <person name="Barron A."/>
            <person name="Clark L."/>
            <person name="Corton C."/>
            <person name="Doggett J."/>
            <person name="Holden M.T.G."/>
            <person name="Larke N."/>
            <person name="Line A."/>
            <person name="Lord A."/>
            <person name="Norbertczak H."/>
            <person name="Ormond D."/>
            <person name="Price C."/>
            <person name="Rabbinowitsch E."/>
            <person name="Woodward J."/>
            <person name="Barrell B.G."/>
            <person name="Parkhill J."/>
        </authorList>
    </citation>
    <scope>NUCLEOTIDE SEQUENCE [LARGE SCALE GENOMIC DNA]</scope>
    <source>
        <strain>ATCC 25285 / DSM 2151 / CCUG 4856 / JCM 11019 / LMG 10263 / NCTC 9343 / Onslow / VPI 2553 / EN-2</strain>
    </source>
</reference>
<accession>Q5L7Q8</accession>
<comment type="catalytic activity">
    <reaction evidence="1">
        <text>tRNA(Arg) + L-arginine + ATP = L-arginyl-tRNA(Arg) + AMP + diphosphate</text>
        <dbReference type="Rhea" id="RHEA:20301"/>
        <dbReference type="Rhea" id="RHEA-COMP:9658"/>
        <dbReference type="Rhea" id="RHEA-COMP:9673"/>
        <dbReference type="ChEBI" id="CHEBI:30616"/>
        <dbReference type="ChEBI" id="CHEBI:32682"/>
        <dbReference type="ChEBI" id="CHEBI:33019"/>
        <dbReference type="ChEBI" id="CHEBI:78442"/>
        <dbReference type="ChEBI" id="CHEBI:78513"/>
        <dbReference type="ChEBI" id="CHEBI:456215"/>
        <dbReference type="EC" id="6.1.1.19"/>
    </reaction>
</comment>
<comment type="subunit">
    <text evidence="1">Monomer.</text>
</comment>
<comment type="subcellular location">
    <subcellularLocation>
        <location evidence="1">Cytoplasm</location>
    </subcellularLocation>
</comment>
<comment type="similarity">
    <text evidence="1">Belongs to the class-I aminoacyl-tRNA synthetase family.</text>
</comment>
<organism>
    <name type="scientific">Bacteroides fragilis (strain ATCC 25285 / DSM 2151 / CCUG 4856 / JCM 11019 / LMG 10263 / NCTC 9343 / Onslow / VPI 2553 / EN-2)</name>
    <dbReference type="NCBI Taxonomy" id="272559"/>
    <lineage>
        <taxon>Bacteria</taxon>
        <taxon>Pseudomonadati</taxon>
        <taxon>Bacteroidota</taxon>
        <taxon>Bacteroidia</taxon>
        <taxon>Bacteroidales</taxon>
        <taxon>Bacteroidaceae</taxon>
        <taxon>Bacteroides</taxon>
    </lineage>
</organism>
<protein>
    <recommendedName>
        <fullName evidence="1">Arginine--tRNA ligase</fullName>
        <ecNumber evidence="1">6.1.1.19</ecNumber>
    </recommendedName>
    <alternativeName>
        <fullName evidence="1">Arginyl-tRNA synthetase</fullName>
        <shortName evidence="1">ArgRS</shortName>
    </alternativeName>
</protein>
<dbReference type="EC" id="6.1.1.19" evidence="1"/>
<dbReference type="EMBL" id="CR626927">
    <property type="protein sequence ID" value="CAH09892.1"/>
    <property type="molecule type" value="Genomic_DNA"/>
</dbReference>
<dbReference type="RefSeq" id="WP_010993767.1">
    <property type="nucleotide sequence ID" value="NC_003228.3"/>
</dbReference>
<dbReference type="SMR" id="Q5L7Q8"/>
<dbReference type="PaxDb" id="272559-BF9343_4111"/>
<dbReference type="GeneID" id="60366056"/>
<dbReference type="KEGG" id="bfs:BF9343_4111"/>
<dbReference type="eggNOG" id="COG0018">
    <property type="taxonomic scope" value="Bacteria"/>
</dbReference>
<dbReference type="HOGENOM" id="CLU_006406_6_1_10"/>
<dbReference type="Proteomes" id="UP000006731">
    <property type="component" value="Chromosome"/>
</dbReference>
<dbReference type="GO" id="GO:0005737">
    <property type="term" value="C:cytoplasm"/>
    <property type="evidence" value="ECO:0007669"/>
    <property type="project" value="UniProtKB-SubCell"/>
</dbReference>
<dbReference type="GO" id="GO:0004814">
    <property type="term" value="F:arginine-tRNA ligase activity"/>
    <property type="evidence" value="ECO:0007669"/>
    <property type="project" value="UniProtKB-UniRule"/>
</dbReference>
<dbReference type="GO" id="GO:0005524">
    <property type="term" value="F:ATP binding"/>
    <property type="evidence" value="ECO:0007669"/>
    <property type="project" value="UniProtKB-UniRule"/>
</dbReference>
<dbReference type="GO" id="GO:0006420">
    <property type="term" value="P:arginyl-tRNA aminoacylation"/>
    <property type="evidence" value="ECO:0007669"/>
    <property type="project" value="UniProtKB-UniRule"/>
</dbReference>
<dbReference type="FunFam" id="3.40.50.620:FF:000125">
    <property type="entry name" value="Arginine--tRNA ligase"/>
    <property type="match status" value="1"/>
</dbReference>
<dbReference type="Gene3D" id="3.30.1360.70">
    <property type="entry name" value="Arginyl tRNA synthetase N-terminal domain"/>
    <property type="match status" value="1"/>
</dbReference>
<dbReference type="Gene3D" id="3.40.50.620">
    <property type="entry name" value="HUPs"/>
    <property type="match status" value="1"/>
</dbReference>
<dbReference type="Gene3D" id="1.10.730.10">
    <property type="entry name" value="Isoleucyl-tRNA Synthetase, Domain 1"/>
    <property type="match status" value="1"/>
</dbReference>
<dbReference type="HAMAP" id="MF_00123">
    <property type="entry name" value="Arg_tRNA_synth"/>
    <property type="match status" value="1"/>
</dbReference>
<dbReference type="InterPro" id="IPR001412">
    <property type="entry name" value="aa-tRNA-synth_I_CS"/>
</dbReference>
<dbReference type="InterPro" id="IPR001278">
    <property type="entry name" value="Arg-tRNA-ligase"/>
</dbReference>
<dbReference type="InterPro" id="IPR005148">
    <property type="entry name" value="Arg-tRNA-synth_N"/>
</dbReference>
<dbReference type="InterPro" id="IPR036695">
    <property type="entry name" value="Arg-tRNA-synth_N_sf"/>
</dbReference>
<dbReference type="InterPro" id="IPR035684">
    <property type="entry name" value="ArgRS_core"/>
</dbReference>
<dbReference type="InterPro" id="IPR008909">
    <property type="entry name" value="DALR_anticod-bd"/>
</dbReference>
<dbReference type="InterPro" id="IPR014729">
    <property type="entry name" value="Rossmann-like_a/b/a_fold"/>
</dbReference>
<dbReference type="InterPro" id="IPR009080">
    <property type="entry name" value="tRNAsynth_Ia_anticodon-bd"/>
</dbReference>
<dbReference type="NCBIfam" id="TIGR00456">
    <property type="entry name" value="argS"/>
    <property type="match status" value="1"/>
</dbReference>
<dbReference type="PANTHER" id="PTHR11956:SF5">
    <property type="entry name" value="ARGININE--TRNA LIGASE, CYTOPLASMIC"/>
    <property type="match status" value="1"/>
</dbReference>
<dbReference type="PANTHER" id="PTHR11956">
    <property type="entry name" value="ARGINYL-TRNA SYNTHETASE"/>
    <property type="match status" value="1"/>
</dbReference>
<dbReference type="Pfam" id="PF03485">
    <property type="entry name" value="Arg_tRNA_synt_N"/>
    <property type="match status" value="1"/>
</dbReference>
<dbReference type="Pfam" id="PF05746">
    <property type="entry name" value="DALR_1"/>
    <property type="match status" value="1"/>
</dbReference>
<dbReference type="Pfam" id="PF00750">
    <property type="entry name" value="tRNA-synt_1d"/>
    <property type="match status" value="1"/>
</dbReference>
<dbReference type="PRINTS" id="PR01038">
    <property type="entry name" value="TRNASYNTHARG"/>
</dbReference>
<dbReference type="SMART" id="SM01016">
    <property type="entry name" value="Arg_tRNA_synt_N"/>
    <property type="match status" value="1"/>
</dbReference>
<dbReference type="SMART" id="SM00836">
    <property type="entry name" value="DALR_1"/>
    <property type="match status" value="1"/>
</dbReference>
<dbReference type="SUPFAM" id="SSF47323">
    <property type="entry name" value="Anticodon-binding domain of a subclass of class I aminoacyl-tRNA synthetases"/>
    <property type="match status" value="1"/>
</dbReference>
<dbReference type="SUPFAM" id="SSF55190">
    <property type="entry name" value="Arginyl-tRNA synthetase (ArgRS), N-terminal 'additional' domain"/>
    <property type="match status" value="1"/>
</dbReference>
<dbReference type="SUPFAM" id="SSF52374">
    <property type="entry name" value="Nucleotidylyl transferase"/>
    <property type="match status" value="1"/>
</dbReference>
<dbReference type="PROSITE" id="PS00178">
    <property type="entry name" value="AA_TRNA_LIGASE_I"/>
    <property type="match status" value="1"/>
</dbReference>
<gene>
    <name evidence="1" type="primary">argS</name>
    <name type="ordered locus">BF4219</name>
</gene>
<name>SYR_BACFN</name>